<sequence>MKITALASAILAVAQGALALPARAPALDITLSQVNNTRIKAVVKNSGTEKITFVHLNFFNDPSPVKKVSLYRNATEVEFTGIKQRLRSDGLSNDALTTLAPGATYEDEFDIASTANLTQGGPVTVRTQGFVPIAMNNKIAGYIPYSSNELELEVDAEKAVAVPASIKPLDRRTKITSSCTGNRATVLNTALRNAASIASKAADAASSGSSALFTEYFKSTSGNIRSAVAARLKAVASEASMNGGGSTTYYCSDPYGYCDSNVLAYTLPSTNEVVNCELFYTLQEVTNDCHGQDQATTIIHEFTHAPGVYPPGTEDLGYGYSAATALSTSNALNNADSYALFANAVYLNCQGQTGGQTTWDGYSQPGQTEPGTQTMWDGYSQPGQTEPGTQTMWDGYSQPGQTEPGTQTTWDGYSQPGQIEPCTQTMWDGGSEPGQTEPDAQTMWDNFYQA</sequence>
<proteinExistence type="inferred from homology"/>
<gene>
    <name type="ORF">AFUA_4G02700</name>
</gene>
<reference key="1">
    <citation type="journal article" date="2005" name="Nature">
        <title>Genomic sequence of the pathogenic and allergenic filamentous fungus Aspergillus fumigatus.</title>
        <authorList>
            <person name="Nierman W.C."/>
            <person name="Pain A."/>
            <person name="Anderson M.J."/>
            <person name="Wortman J.R."/>
            <person name="Kim H.S."/>
            <person name="Arroyo J."/>
            <person name="Berriman M."/>
            <person name="Abe K."/>
            <person name="Archer D.B."/>
            <person name="Bermejo C."/>
            <person name="Bennett J.W."/>
            <person name="Bowyer P."/>
            <person name="Chen D."/>
            <person name="Collins M."/>
            <person name="Coulsen R."/>
            <person name="Davies R."/>
            <person name="Dyer P.S."/>
            <person name="Farman M.L."/>
            <person name="Fedorova N."/>
            <person name="Fedorova N.D."/>
            <person name="Feldblyum T.V."/>
            <person name="Fischer R."/>
            <person name="Fosker N."/>
            <person name="Fraser A."/>
            <person name="Garcia J.L."/>
            <person name="Garcia M.J."/>
            <person name="Goble A."/>
            <person name="Goldman G.H."/>
            <person name="Gomi K."/>
            <person name="Griffith-Jones S."/>
            <person name="Gwilliam R."/>
            <person name="Haas B.J."/>
            <person name="Haas H."/>
            <person name="Harris D.E."/>
            <person name="Horiuchi H."/>
            <person name="Huang J."/>
            <person name="Humphray S."/>
            <person name="Jimenez J."/>
            <person name="Keller N."/>
            <person name="Khouri H."/>
            <person name="Kitamoto K."/>
            <person name="Kobayashi T."/>
            <person name="Konzack S."/>
            <person name="Kulkarni R."/>
            <person name="Kumagai T."/>
            <person name="Lafton A."/>
            <person name="Latge J.-P."/>
            <person name="Li W."/>
            <person name="Lord A."/>
            <person name="Lu C."/>
            <person name="Majoros W.H."/>
            <person name="May G.S."/>
            <person name="Miller B.L."/>
            <person name="Mohamoud Y."/>
            <person name="Molina M."/>
            <person name="Monod M."/>
            <person name="Mouyna I."/>
            <person name="Mulligan S."/>
            <person name="Murphy L.D."/>
            <person name="O'Neil S."/>
            <person name="Paulsen I."/>
            <person name="Penalva M.A."/>
            <person name="Pertea M."/>
            <person name="Price C."/>
            <person name="Pritchard B.L."/>
            <person name="Quail M.A."/>
            <person name="Rabbinowitsch E."/>
            <person name="Rawlins N."/>
            <person name="Rajandream M.A."/>
            <person name="Reichard U."/>
            <person name="Renauld H."/>
            <person name="Robson G.D."/>
            <person name="Rodriguez de Cordoba S."/>
            <person name="Rodriguez-Pena J.M."/>
            <person name="Ronning C.M."/>
            <person name="Rutter S."/>
            <person name="Salzberg S.L."/>
            <person name="Sanchez M."/>
            <person name="Sanchez-Ferrero J.C."/>
            <person name="Saunders D."/>
            <person name="Seeger K."/>
            <person name="Squares R."/>
            <person name="Squares S."/>
            <person name="Takeuchi M."/>
            <person name="Tekaia F."/>
            <person name="Turner G."/>
            <person name="Vazquez de Aldana C.R."/>
            <person name="Weidman J."/>
            <person name="White O."/>
            <person name="Woodward J.R."/>
            <person name="Yu J.-H."/>
            <person name="Fraser C.M."/>
            <person name="Galagan J.E."/>
            <person name="Asai K."/>
            <person name="Machida M."/>
            <person name="Hall N."/>
            <person name="Barrell B.G."/>
            <person name="Denning D.W."/>
        </authorList>
    </citation>
    <scope>NUCLEOTIDE SEQUENCE [LARGE SCALE GENOMIC DNA]</scope>
    <source>
        <strain>ATCC MYA-4609 / CBS 101355 / FGSC A1100 / Af293</strain>
    </source>
</reference>
<comment type="function">
    <text evidence="1">Secreted metalloproteinase that allows assimilation of proteinaceous substrates. Shows high activities on basic nuclear substrates such as histone and protamine. May be involved in virulence (By similarity).</text>
</comment>
<comment type="catalytic activity">
    <reaction>
        <text>Preferential cleavage of bonds with hydrophobic residues in P1'. Also 3-Asn-|-Gln-4 and 8-Gly-|-Ser-9 bonds in insulin B chain.</text>
        <dbReference type="EC" id="3.4.24.39"/>
    </reaction>
</comment>
<comment type="cofactor">
    <cofactor evidence="1">
        <name>Zn(2+)</name>
        <dbReference type="ChEBI" id="CHEBI:29105"/>
    </cofactor>
    <text evidence="1">Binds 1 zinc ion per subunit.</text>
</comment>
<comment type="subcellular location">
    <subcellularLocation>
        <location evidence="1">Secreted</location>
    </subcellularLocation>
</comment>
<comment type="similarity">
    <text evidence="5">Belongs to the peptidase M35 family.</text>
</comment>
<comment type="sequence caution" evidence="5">
    <conflict type="erroneous initiation">
        <sequence resource="EMBL-CDS" id="EAL84418"/>
    </conflict>
    <text>Extended N-terminus.</text>
</comment>
<keyword id="KW-0165">Cleavage on pair of basic residues</keyword>
<keyword id="KW-1015">Disulfide bond</keyword>
<keyword id="KW-0378">Hydrolase</keyword>
<keyword id="KW-0479">Metal-binding</keyword>
<keyword id="KW-0482">Metalloprotease</keyword>
<keyword id="KW-0645">Protease</keyword>
<keyword id="KW-1185">Reference proteome</keyword>
<keyword id="KW-0964">Secreted</keyword>
<keyword id="KW-0732">Signal</keyword>
<keyword id="KW-0843">Virulence</keyword>
<keyword id="KW-0862">Zinc</keyword>
<keyword id="KW-0865">Zymogen</keyword>
<feature type="signal peptide" evidence="2">
    <location>
        <begin position="1"/>
        <end position="19"/>
    </location>
</feature>
<feature type="propeptide" id="PRO_0000407136" evidence="1">
    <location>
        <begin position="20"/>
        <end position="172"/>
    </location>
</feature>
<feature type="chain" id="PRO_0000407137" description="Neutral protease 2 homolog AFUB_070680">
    <location>
        <begin position="173"/>
        <end position="450"/>
    </location>
</feature>
<feature type="region of interest" description="Disordered" evidence="4">
    <location>
        <begin position="364"/>
        <end position="416"/>
    </location>
</feature>
<feature type="compositionally biased region" description="Polar residues" evidence="4">
    <location>
        <begin position="364"/>
        <end position="392"/>
    </location>
</feature>
<feature type="compositionally biased region" description="Low complexity" evidence="4">
    <location>
        <begin position="398"/>
        <end position="409"/>
    </location>
</feature>
<feature type="active site" evidence="3">
    <location>
        <position position="301"/>
    </location>
</feature>
<feature type="binding site" evidence="3">
    <location>
        <position position="300"/>
    </location>
    <ligand>
        <name>Zn(2+)</name>
        <dbReference type="ChEBI" id="CHEBI:29105"/>
        <note>catalytic</note>
    </ligand>
</feature>
<feature type="binding site" evidence="3">
    <location>
        <position position="304"/>
    </location>
    <ligand>
        <name>Zn(2+)</name>
        <dbReference type="ChEBI" id="CHEBI:29105"/>
        <note>catalytic</note>
    </ligand>
</feature>
<feature type="binding site" evidence="3">
    <location>
        <position position="315"/>
    </location>
    <ligand>
        <name>Zn(2+)</name>
        <dbReference type="ChEBI" id="CHEBI:29105"/>
        <note>catalytic</note>
    </ligand>
</feature>
<feature type="disulfide bond" evidence="1">
    <location>
        <begin position="179"/>
        <end position="251"/>
    </location>
</feature>
<feature type="disulfide bond" evidence="1">
    <location>
        <begin position="258"/>
        <end position="276"/>
    </location>
</feature>
<accession>Q4WA45</accession>
<name>NPIIC_ASPFU</name>
<evidence type="ECO:0000250" key="1"/>
<evidence type="ECO:0000255" key="2"/>
<evidence type="ECO:0000255" key="3">
    <source>
        <dbReference type="PROSITE-ProRule" id="PRU10095"/>
    </source>
</evidence>
<evidence type="ECO:0000256" key="4">
    <source>
        <dbReference type="SAM" id="MobiDB-lite"/>
    </source>
</evidence>
<evidence type="ECO:0000305" key="5"/>
<organism>
    <name type="scientific">Aspergillus fumigatus (strain ATCC MYA-4609 / CBS 101355 / FGSC A1100 / Af293)</name>
    <name type="common">Neosartorya fumigata</name>
    <dbReference type="NCBI Taxonomy" id="330879"/>
    <lineage>
        <taxon>Eukaryota</taxon>
        <taxon>Fungi</taxon>
        <taxon>Dikarya</taxon>
        <taxon>Ascomycota</taxon>
        <taxon>Pezizomycotina</taxon>
        <taxon>Eurotiomycetes</taxon>
        <taxon>Eurotiomycetidae</taxon>
        <taxon>Eurotiales</taxon>
        <taxon>Aspergillaceae</taxon>
        <taxon>Aspergillus</taxon>
        <taxon>Aspergillus subgen. Fumigati</taxon>
    </lineage>
</organism>
<dbReference type="EC" id="3.4.24.39"/>
<dbReference type="EMBL" id="AAHF01000016">
    <property type="protein sequence ID" value="EAL84418.2"/>
    <property type="status" value="ALT_INIT"/>
    <property type="molecule type" value="Genomic_DNA"/>
</dbReference>
<dbReference type="RefSeq" id="XP_746456.2">
    <property type="nucleotide sequence ID" value="XM_741363.2"/>
</dbReference>
<dbReference type="SMR" id="Q4WA45"/>
<dbReference type="STRING" id="330879.Q4WA45"/>
<dbReference type="MEROPS" id="M35.002"/>
<dbReference type="GeneID" id="3503899"/>
<dbReference type="KEGG" id="afm:AFUA_4G02700"/>
<dbReference type="eggNOG" id="ENOG502SGF5">
    <property type="taxonomic scope" value="Eukaryota"/>
</dbReference>
<dbReference type="HOGENOM" id="CLU_039313_1_1_1"/>
<dbReference type="InParanoid" id="Q4WA45"/>
<dbReference type="OrthoDB" id="412874at2759"/>
<dbReference type="Proteomes" id="UP000002530">
    <property type="component" value="Chromosome 4"/>
</dbReference>
<dbReference type="GO" id="GO:0005576">
    <property type="term" value="C:extracellular region"/>
    <property type="evidence" value="ECO:0007669"/>
    <property type="project" value="UniProtKB-SubCell"/>
</dbReference>
<dbReference type="GO" id="GO:0046872">
    <property type="term" value="F:metal ion binding"/>
    <property type="evidence" value="ECO:0007669"/>
    <property type="project" value="UniProtKB-KW"/>
</dbReference>
<dbReference type="GO" id="GO:0004222">
    <property type="term" value="F:metalloendopeptidase activity"/>
    <property type="evidence" value="ECO:0007669"/>
    <property type="project" value="InterPro"/>
</dbReference>
<dbReference type="GO" id="GO:0006508">
    <property type="term" value="P:proteolysis"/>
    <property type="evidence" value="ECO:0007669"/>
    <property type="project" value="UniProtKB-KW"/>
</dbReference>
<dbReference type="CDD" id="cd11008">
    <property type="entry name" value="M35_deuterolysin_like"/>
    <property type="match status" value="1"/>
</dbReference>
<dbReference type="Gene3D" id="2.60.40.2970">
    <property type="match status" value="1"/>
</dbReference>
<dbReference type="Gene3D" id="3.40.390.10">
    <property type="entry name" value="Collagenase (Catalytic Domain)"/>
    <property type="match status" value="1"/>
</dbReference>
<dbReference type="InterPro" id="IPR050414">
    <property type="entry name" value="Fungal_M35_metalloproteases"/>
</dbReference>
<dbReference type="InterPro" id="IPR029463">
    <property type="entry name" value="Lys_MEP"/>
</dbReference>
<dbReference type="InterPro" id="IPR024079">
    <property type="entry name" value="MetalloPept_cat_dom_sf"/>
</dbReference>
<dbReference type="InterPro" id="IPR001384">
    <property type="entry name" value="Peptidase_M35"/>
</dbReference>
<dbReference type="PANTHER" id="PTHR37016">
    <property type="match status" value="1"/>
</dbReference>
<dbReference type="PANTHER" id="PTHR37016:SF3">
    <property type="entry name" value="NEUTRAL PROTEASE 2-RELATED"/>
    <property type="match status" value="1"/>
</dbReference>
<dbReference type="Pfam" id="PF02102">
    <property type="entry name" value="Peptidase_M35"/>
    <property type="match status" value="1"/>
</dbReference>
<dbReference type="PRINTS" id="PR00768">
    <property type="entry name" value="DEUTEROLYSIN"/>
</dbReference>
<dbReference type="SMART" id="SM01351">
    <property type="entry name" value="Aspzincin_M35"/>
    <property type="match status" value="1"/>
</dbReference>
<dbReference type="SUPFAM" id="SSF55486">
    <property type="entry name" value="Metalloproteases ('zincins'), catalytic domain"/>
    <property type="match status" value="1"/>
</dbReference>
<dbReference type="PROSITE" id="PS00142">
    <property type="entry name" value="ZINC_PROTEASE"/>
    <property type="match status" value="1"/>
</dbReference>
<protein>
    <recommendedName>
        <fullName>Neutral protease 2 homolog AFUB_070680</fullName>
        <ecNumber>3.4.24.39</ecNumber>
    </recommendedName>
    <alternativeName>
        <fullName>Deuterolysin AFUB_070680</fullName>
    </alternativeName>
</protein>